<proteinExistence type="evidence at protein level"/>
<sequence length="434" mass="43029">MTAPVWLASPPEVHSALLSAGPGPGSLQAAAAGWSALSAEYAAVAQELSVVVAAVGAGVWQGPSAELFVAAYVPYVAWLVQASADSAAAAGEHEAAAAGYVCALAEMPTLPELAANHLTHAVLVATNFFGINTIPIALNEADYVRMWVQAATVMSAYEAVVGAALVATPHTGPAPVIVKPGANEASNAVAAATITPFPWHEIVQFLEETFAAYDQYLSALLSELPAVAWVWFQLFVDILGFNIIGFIITLASNAQLLTEFAINASYVAVGLLYAIAGVIDIVVEWVIGNLFGVVPLLGGPLLGALAAAVVPGVAGLAGVAGLAALPAVGAAAGAPAALVGSVAPVSGGVVSPQARLVSAVEPAPASTSVSVLASDRGAGALGFVGTAGKESVGQPAGLTVLADEFGDGAPVPMLPGSWGPDLVGVAGDGGLVSV</sequence>
<reference key="1">
    <citation type="journal article" date="1998" name="Nature">
        <title>Deciphering the biology of Mycobacterium tuberculosis from the complete genome sequence.</title>
        <authorList>
            <person name="Cole S.T."/>
            <person name="Brosch R."/>
            <person name="Parkhill J."/>
            <person name="Garnier T."/>
            <person name="Churcher C.M."/>
            <person name="Harris D.E."/>
            <person name="Gordon S.V."/>
            <person name="Eiglmeier K."/>
            <person name="Gas S."/>
            <person name="Barry C.E. III"/>
            <person name="Tekaia F."/>
            <person name="Badcock K."/>
            <person name="Basham D."/>
            <person name="Brown D."/>
            <person name="Chillingworth T."/>
            <person name="Connor R."/>
            <person name="Davies R.M."/>
            <person name="Devlin K."/>
            <person name="Feltwell T."/>
            <person name="Gentles S."/>
            <person name="Hamlin N."/>
            <person name="Holroyd S."/>
            <person name="Hornsby T."/>
            <person name="Jagels K."/>
            <person name="Krogh A."/>
            <person name="McLean J."/>
            <person name="Moule S."/>
            <person name="Murphy L.D."/>
            <person name="Oliver S."/>
            <person name="Osborne J."/>
            <person name="Quail M.A."/>
            <person name="Rajandream M.A."/>
            <person name="Rogers J."/>
            <person name="Rutter S."/>
            <person name="Seeger K."/>
            <person name="Skelton S."/>
            <person name="Squares S."/>
            <person name="Squares R."/>
            <person name="Sulston J.E."/>
            <person name="Taylor K."/>
            <person name="Whitehead S."/>
            <person name="Barrell B.G."/>
        </authorList>
    </citation>
    <scope>NUCLEOTIDE SEQUENCE [LARGE SCALE GENOMIC DNA]</scope>
    <source>
        <strain>ATCC 25618 / H37Rv</strain>
    </source>
</reference>
<reference key="2">
    <citation type="submission" date="1991-04" db="EMBL/GenBank/DDBJ databases">
        <authorList>
            <person name="Patki A.H."/>
            <person name="Dale J.W."/>
        </authorList>
    </citation>
    <scope>NUCLEOTIDE SEQUENCE [GENOMIC DNA] OF 160-374</scope>
    <source>
        <strain>Isolate 50410</strain>
    </source>
</reference>
<reference key="3">
    <citation type="journal article" date="2008" name="J. Med. Microbiol.">
        <title>Characterization of T-cell immunogenicity of two PE/PPE proteins of Mycobacterium tuberculosis.</title>
        <authorList>
            <person name="Chaitra M.G."/>
            <person name="Shaila M.S."/>
            <person name="Nayak R."/>
        </authorList>
    </citation>
    <scope>BIOTECHNOLOGY</scope>
    <source>
        <strain>H37Rv</strain>
    </source>
</reference>
<reference key="4">
    <citation type="journal article" date="2008" name="BMC Syst. Biol.">
        <title>targetTB: a target identification pipeline for Mycobacterium tuberculosis through an interactome, reactome and genome-scale structural analysis.</title>
        <authorList>
            <person name="Raman K."/>
            <person name="Yeturu K."/>
            <person name="Chandra N."/>
        </authorList>
    </citation>
    <scope>IDENTIFICATION AS A DRUG TARGET [LARGE SCALE ANALYSIS]</scope>
</reference>
<accession>P9WHY9</accession>
<accession>L0TCW9</accession>
<accession>O53265</accession>
<accession>P31500</accession>
<comment type="biotechnology">
    <text evidence="1">Exhibits vaccine potential. Immunogenicity is demonstrated in BALB/c mice. Immunization with this protein induces a significant number of CD8+ T cells and a strong Th1-type response, with high gamma interferon (IFN-gamma) and low interleukin-4 responses, and activation of the bactericidal activity of macrophages. Identified T-cell epitopes may contribute to immunity against tuberculosis if included in a vaccine.</text>
</comment>
<comment type="miscellaneous">
    <text evidence="2">Was identified as a high-confidence drug target.</text>
</comment>
<comment type="similarity">
    <text evidence="3">Belongs to the mycobacterial PPE family.</text>
</comment>
<comment type="caution">
    <text evidence="4">Was originally thought to be a dihydrofolate reductase.</text>
</comment>
<comment type="sequence caution" evidence="3">
    <conflict type="frameshift">
        <sequence resource="EMBL-CDS" id="CAA41961"/>
    </conflict>
</comment>
<name>PPE46_MYCTU</name>
<feature type="chain" id="PRO_0000217851" description="Uncharacterized PPE family protein PPE46">
    <location>
        <begin position="1"/>
        <end position="434"/>
    </location>
</feature>
<organism>
    <name type="scientific">Mycobacterium tuberculosis (strain ATCC 25618 / H37Rv)</name>
    <dbReference type="NCBI Taxonomy" id="83332"/>
    <lineage>
        <taxon>Bacteria</taxon>
        <taxon>Bacillati</taxon>
        <taxon>Actinomycetota</taxon>
        <taxon>Actinomycetes</taxon>
        <taxon>Mycobacteriales</taxon>
        <taxon>Mycobacteriaceae</taxon>
        <taxon>Mycobacterium</taxon>
        <taxon>Mycobacterium tuberculosis complex</taxon>
    </lineage>
</organism>
<gene>
    <name type="primary">PPE46</name>
    <name type="ordered locus">Rv3018c</name>
    <name type="ORF">MTV012.32c</name>
</gene>
<protein>
    <recommendedName>
        <fullName>Uncharacterized PPE family protein PPE46</fullName>
    </recommendedName>
</protein>
<evidence type="ECO:0000269" key="1">
    <source>
    </source>
</evidence>
<evidence type="ECO:0000269" key="2">
    <source>
    </source>
</evidence>
<evidence type="ECO:0000305" key="3"/>
<evidence type="ECO:0000305" key="4">
    <source ref="2"/>
</evidence>
<keyword id="KW-1185">Reference proteome</keyword>
<dbReference type="EMBL" id="X59271">
    <property type="protein sequence ID" value="CAA41961.1"/>
    <property type="status" value="ALT_FRAME"/>
    <property type="molecule type" value="Genomic_DNA"/>
</dbReference>
<dbReference type="EMBL" id="AL123456">
    <property type="protein sequence ID" value="CCP45824.1"/>
    <property type="molecule type" value="Genomic_DNA"/>
</dbReference>
<dbReference type="PIR" id="E70857">
    <property type="entry name" value="E70857"/>
</dbReference>
<dbReference type="RefSeq" id="WP_003910691.1">
    <property type="nucleotide sequence ID" value="NC_018143.2"/>
</dbReference>
<dbReference type="RefSeq" id="YP_177918.1">
    <property type="nucleotide sequence ID" value="NC_000962.3"/>
</dbReference>
<dbReference type="SMR" id="P9WHY9"/>
<dbReference type="STRING" id="83332.Rv3018c"/>
<dbReference type="PaxDb" id="83332-Rv3018c"/>
<dbReference type="GeneID" id="888940"/>
<dbReference type="KEGG" id="mtu:Rv3018c"/>
<dbReference type="KEGG" id="mtv:RVBD_3018c"/>
<dbReference type="TubercuList" id="Rv3018c"/>
<dbReference type="eggNOG" id="COG5651">
    <property type="taxonomic scope" value="Bacteria"/>
</dbReference>
<dbReference type="InParanoid" id="P9WHY9"/>
<dbReference type="OrthoDB" id="4753487at2"/>
<dbReference type="PhylomeDB" id="P9WHY9"/>
<dbReference type="Proteomes" id="UP000001584">
    <property type="component" value="Chromosome"/>
</dbReference>
<dbReference type="GO" id="GO:0052572">
    <property type="term" value="P:response to host immune response"/>
    <property type="evidence" value="ECO:0000318"/>
    <property type="project" value="GO_Central"/>
</dbReference>
<dbReference type="FunFam" id="1.20.1260.20:FF:000001">
    <property type="entry name" value="PPE family protein PPE41"/>
    <property type="match status" value="1"/>
</dbReference>
<dbReference type="Gene3D" id="1.20.1260.20">
    <property type="entry name" value="PPE superfamily"/>
    <property type="match status" value="1"/>
</dbReference>
<dbReference type="InterPro" id="IPR043641">
    <property type="entry name" value="PPE-PPW_C"/>
</dbReference>
<dbReference type="InterPro" id="IPR000030">
    <property type="entry name" value="PPE_dom"/>
</dbReference>
<dbReference type="InterPro" id="IPR038332">
    <property type="entry name" value="PPE_sf"/>
</dbReference>
<dbReference type="PANTHER" id="PTHR46766">
    <property type="entry name" value="GLUTAMINE-RICH PROTEIN 2"/>
    <property type="match status" value="1"/>
</dbReference>
<dbReference type="PANTHER" id="PTHR46766:SF1">
    <property type="entry name" value="GLUTAMINE-RICH PROTEIN 2"/>
    <property type="match status" value="1"/>
</dbReference>
<dbReference type="Pfam" id="PF00823">
    <property type="entry name" value="PPE"/>
    <property type="match status" value="1"/>
</dbReference>
<dbReference type="Pfam" id="PF18878">
    <property type="entry name" value="PPE-PPW"/>
    <property type="match status" value="1"/>
</dbReference>
<dbReference type="SUPFAM" id="SSF140459">
    <property type="entry name" value="PE/PPE dimer-like"/>
    <property type="match status" value="1"/>
</dbReference>